<organism>
    <name type="scientific">Escherichia coli (strain K12 / DH10B)</name>
    <dbReference type="NCBI Taxonomy" id="316385"/>
    <lineage>
        <taxon>Bacteria</taxon>
        <taxon>Pseudomonadati</taxon>
        <taxon>Pseudomonadota</taxon>
        <taxon>Gammaproteobacteria</taxon>
        <taxon>Enterobacterales</taxon>
        <taxon>Enterobacteriaceae</taxon>
        <taxon>Escherichia</taxon>
    </lineage>
</organism>
<gene>
    <name evidence="1" type="primary">fadB</name>
    <name type="ordered locus">ECDH10B_4035</name>
</gene>
<dbReference type="EC" id="4.2.1.17" evidence="1"/>
<dbReference type="EC" id="5.1.2.3" evidence="1"/>
<dbReference type="EC" id="5.3.3.8" evidence="1"/>
<dbReference type="EC" id="1.1.1.35" evidence="1"/>
<dbReference type="EMBL" id="CP000948">
    <property type="protein sequence ID" value="ACB04866.1"/>
    <property type="molecule type" value="Genomic_DNA"/>
</dbReference>
<dbReference type="RefSeq" id="WP_000965936.1">
    <property type="nucleotide sequence ID" value="NC_010473.1"/>
</dbReference>
<dbReference type="SMR" id="B1XAK8"/>
<dbReference type="KEGG" id="ecd:ECDH10B_4035"/>
<dbReference type="HOGENOM" id="CLU_009834_16_3_6"/>
<dbReference type="UniPathway" id="UPA00659"/>
<dbReference type="GO" id="GO:0036125">
    <property type="term" value="C:fatty acid beta-oxidation multienzyme complex"/>
    <property type="evidence" value="ECO:0007669"/>
    <property type="project" value="InterPro"/>
</dbReference>
<dbReference type="GO" id="GO:0008692">
    <property type="term" value="F:3-hydroxybutyryl-CoA epimerase activity"/>
    <property type="evidence" value="ECO:0007669"/>
    <property type="project" value="UniProtKB-UniRule"/>
</dbReference>
<dbReference type="GO" id="GO:0004165">
    <property type="term" value="F:delta(3)-delta(2)-enoyl-CoA isomerase activity"/>
    <property type="evidence" value="ECO:0007669"/>
    <property type="project" value="UniProtKB-UniRule"/>
</dbReference>
<dbReference type="GO" id="GO:0004300">
    <property type="term" value="F:enoyl-CoA hydratase activity"/>
    <property type="evidence" value="ECO:0007669"/>
    <property type="project" value="UniProtKB-UniRule"/>
</dbReference>
<dbReference type="GO" id="GO:0016509">
    <property type="term" value="F:long-chain-3-hydroxyacyl-CoA dehydrogenase activity"/>
    <property type="evidence" value="ECO:0007669"/>
    <property type="project" value="TreeGrafter"/>
</dbReference>
<dbReference type="GO" id="GO:0070403">
    <property type="term" value="F:NAD+ binding"/>
    <property type="evidence" value="ECO:0007669"/>
    <property type="project" value="InterPro"/>
</dbReference>
<dbReference type="GO" id="GO:0006635">
    <property type="term" value="P:fatty acid beta-oxidation"/>
    <property type="evidence" value="ECO:0007669"/>
    <property type="project" value="UniProtKB-UniRule"/>
</dbReference>
<dbReference type="CDD" id="cd06558">
    <property type="entry name" value="crotonase-like"/>
    <property type="match status" value="1"/>
</dbReference>
<dbReference type="FunFam" id="1.10.1040.50:FF:000001">
    <property type="entry name" value="Fatty acid oxidation complex subunit alpha"/>
    <property type="match status" value="1"/>
</dbReference>
<dbReference type="FunFam" id="3.90.226.10:FF:000018">
    <property type="entry name" value="Fatty acid oxidation complex subunit alpha"/>
    <property type="match status" value="1"/>
</dbReference>
<dbReference type="FunFam" id="3.40.50.720:FF:000009">
    <property type="entry name" value="Fatty oxidation complex, alpha subunit"/>
    <property type="match status" value="1"/>
</dbReference>
<dbReference type="Gene3D" id="1.10.1040.50">
    <property type="match status" value="1"/>
</dbReference>
<dbReference type="Gene3D" id="3.90.226.10">
    <property type="entry name" value="2-enoyl-CoA Hydratase, Chain A, domain 1"/>
    <property type="match status" value="1"/>
</dbReference>
<dbReference type="Gene3D" id="3.40.50.720">
    <property type="entry name" value="NAD(P)-binding Rossmann-like Domain"/>
    <property type="match status" value="1"/>
</dbReference>
<dbReference type="HAMAP" id="MF_01621">
    <property type="entry name" value="FadB"/>
    <property type="match status" value="1"/>
</dbReference>
<dbReference type="InterPro" id="IPR006180">
    <property type="entry name" value="3-OHacyl-CoA_DH_CS"/>
</dbReference>
<dbReference type="InterPro" id="IPR006176">
    <property type="entry name" value="3-OHacyl-CoA_DH_NAD-bd"/>
</dbReference>
<dbReference type="InterPro" id="IPR006108">
    <property type="entry name" value="3HC_DH_C"/>
</dbReference>
<dbReference type="InterPro" id="IPR008927">
    <property type="entry name" value="6-PGluconate_DH-like_C_sf"/>
</dbReference>
<dbReference type="InterPro" id="IPR029045">
    <property type="entry name" value="ClpP/crotonase-like_dom_sf"/>
</dbReference>
<dbReference type="InterPro" id="IPR018376">
    <property type="entry name" value="Enoyl-CoA_hyd/isom_CS"/>
</dbReference>
<dbReference type="InterPro" id="IPR001753">
    <property type="entry name" value="Enoyl-CoA_hydra/iso"/>
</dbReference>
<dbReference type="InterPro" id="IPR050136">
    <property type="entry name" value="FA_oxidation_alpha_subunit"/>
</dbReference>
<dbReference type="InterPro" id="IPR012799">
    <property type="entry name" value="FadB"/>
</dbReference>
<dbReference type="InterPro" id="IPR036291">
    <property type="entry name" value="NAD(P)-bd_dom_sf"/>
</dbReference>
<dbReference type="NCBIfam" id="TIGR02437">
    <property type="entry name" value="FadB"/>
    <property type="match status" value="1"/>
</dbReference>
<dbReference type="NCBIfam" id="NF008727">
    <property type="entry name" value="PRK11730.1"/>
    <property type="match status" value="1"/>
</dbReference>
<dbReference type="PANTHER" id="PTHR43612">
    <property type="entry name" value="TRIFUNCTIONAL ENZYME SUBUNIT ALPHA"/>
    <property type="match status" value="1"/>
</dbReference>
<dbReference type="PANTHER" id="PTHR43612:SF3">
    <property type="entry name" value="TRIFUNCTIONAL ENZYME SUBUNIT ALPHA, MITOCHONDRIAL"/>
    <property type="match status" value="1"/>
</dbReference>
<dbReference type="Pfam" id="PF00725">
    <property type="entry name" value="3HCDH"/>
    <property type="match status" value="2"/>
</dbReference>
<dbReference type="Pfam" id="PF02737">
    <property type="entry name" value="3HCDH_N"/>
    <property type="match status" value="1"/>
</dbReference>
<dbReference type="Pfam" id="PF00378">
    <property type="entry name" value="ECH_1"/>
    <property type="match status" value="1"/>
</dbReference>
<dbReference type="SUPFAM" id="SSF48179">
    <property type="entry name" value="6-phosphogluconate dehydrogenase C-terminal domain-like"/>
    <property type="match status" value="2"/>
</dbReference>
<dbReference type="SUPFAM" id="SSF52096">
    <property type="entry name" value="ClpP/crotonase"/>
    <property type="match status" value="1"/>
</dbReference>
<dbReference type="SUPFAM" id="SSF51735">
    <property type="entry name" value="NAD(P)-binding Rossmann-fold domains"/>
    <property type="match status" value="1"/>
</dbReference>
<dbReference type="PROSITE" id="PS00067">
    <property type="entry name" value="3HCDH"/>
    <property type="match status" value="1"/>
</dbReference>
<dbReference type="PROSITE" id="PS00166">
    <property type="entry name" value="ENOYL_COA_HYDRATASE"/>
    <property type="match status" value="1"/>
</dbReference>
<proteinExistence type="inferred from homology"/>
<sequence length="729" mass="79594">MLYKGDTLYLDWLEDGIAELVFDAPGSVNKLDTATVASLGEAIGVLEQQSDLKGLLLRSNKAAFIVGADITEFLSLFLVPEEQLSQWLHFANSVFNRLEDLPVPTIAAVNGYALGGGCECVLATDYRLATPDLRIGLPETKLGIMPGFGGSVRMPRMLGADSALEIIAAGKDVGADQALKIGLVDGVVKAEKLVEGAKAVLRQAINGDLDWKAKRQPKLEPLKLSKIEATMSFTIAKGMVAQTAGKHYPAPITAVKTIEAAARFGREEALNLENKSFVPLAHTNEARALVGIFLNDQYVKGKAKKLTKDVETPKQAAVLGAGIMGGGIAYQSAWKGVPVVMKDINDKSLTLGMTEAAKLLNKQLERGKIDGLKLAGVISTIHPTLDYAGFDRVDIVVEAVVENPKVKKAVLAETEQKVRQDTVLASNTSTIPISELANALERPENFCGMHFFNPVHRMPLVEIIRGEKSSDETIAKVVAWASKMGKTPIVVNDCPGFFVNRVLFPYFAGFSQLLRDGADFRKIDKVMEKQFGWPMGPAYLLDVVGIDTAHHAQAVMAAGFPQRMQKDYRDAIDALFDANRFGQKNGLGFWRYKEDSKGKPKKEEDAAVEDLLAEVSQPKRDFSEEEIIARMMIPMVNEVVRCLEEGIIATPAEADMALVYGLGFPPFHGGAFRWLDTLGSAKYLDMAQQYQHLGPLYEVPEGLRNKARHNEPYYPPVEPARPVGDLKTA</sequence>
<evidence type="ECO:0000255" key="1">
    <source>
        <dbReference type="HAMAP-Rule" id="MF_01621"/>
    </source>
</evidence>
<evidence type="ECO:0000256" key="2">
    <source>
        <dbReference type="SAM" id="MobiDB-lite"/>
    </source>
</evidence>
<protein>
    <recommendedName>
        <fullName evidence="1">Fatty acid oxidation complex subunit alpha</fullName>
    </recommendedName>
    <domain>
        <recommendedName>
            <fullName evidence="1">Enoyl-CoA hydratase/Delta(3)-cis-Delta(2)-trans-enoyl-CoA isomerase/3-hydroxybutyryl-CoA epimerase</fullName>
            <ecNumber evidence="1">4.2.1.17</ecNumber>
            <ecNumber evidence="1">5.1.2.3</ecNumber>
            <ecNumber evidence="1">5.3.3.8</ecNumber>
        </recommendedName>
    </domain>
    <domain>
        <recommendedName>
            <fullName evidence="1">3-hydroxyacyl-CoA dehydrogenase</fullName>
            <ecNumber evidence="1">1.1.1.35</ecNumber>
        </recommendedName>
    </domain>
</protein>
<keyword id="KW-0276">Fatty acid metabolism</keyword>
<keyword id="KW-0413">Isomerase</keyword>
<keyword id="KW-0442">Lipid degradation</keyword>
<keyword id="KW-0443">Lipid metabolism</keyword>
<keyword id="KW-0456">Lyase</keyword>
<keyword id="KW-0511">Multifunctional enzyme</keyword>
<keyword id="KW-0520">NAD</keyword>
<keyword id="KW-0560">Oxidoreductase</keyword>
<reference key="1">
    <citation type="journal article" date="2008" name="J. Bacteriol.">
        <title>The complete genome sequence of Escherichia coli DH10B: insights into the biology of a laboratory workhorse.</title>
        <authorList>
            <person name="Durfee T."/>
            <person name="Nelson R."/>
            <person name="Baldwin S."/>
            <person name="Plunkett G. III"/>
            <person name="Burland V."/>
            <person name="Mau B."/>
            <person name="Petrosino J.F."/>
            <person name="Qin X."/>
            <person name="Muzny D.M."/>
            <person name="Ayele M."/>
            <person name="Gibbs R.A."/>
            <person name="Csorgo B."/>
            <person name="Posfai G."/>
            <person name="Weinstock G.M."/>
            <person name="Blattner F.R."/>
        </authorList>
    </citation>
    <scope>NUCLEOTIDE SEQUENCE [LARGE SCALE GENOMIC DNA]</scope>
    <source>
        <strain>K12 / DH10B</strain>
    </source>
</reference>
<feature type="chain" id="PRO_1000186039" description="Fatty acid oxidation complex subunit alpha">
    <location>
        <begin position="1"/>
        <end position="729"/>
    </location>
</feature>
<feature type="region of interest" description="Enoyl-CoA hydratase/isomerase" evidence="1">
    <location>
        <begin position="1"/>
        <end position="189"/>
    </location>
</feature>
<feature type="region of interest" description="3-hydroxyacyl-CoA dehydrogenase" evidence="1">
    <location>
        <begin position="311"/>
        <end position="729"/>
    </location>
</feature>
<feature type="region of interest" description="Disordered" evidence="2">
    <location>
        <begin position="708"/>
        <end position="729"/>
    </location>
</feature>
<feature type="active site" description="For 3-hydroxyacyl-CoA dehydrogenase activity" evidence="1">
    <location>
        <position position="450"/>
    </location>
</feature>
<feature type="binding site" evidence="1">
    <location>
        <position position="296"/>
    </location>
    <ligand>
        <name>substrate</name>
    </ligand>
</feature>
<feature type="binding site" evidence="1">
    <location>
        <position position="324"/>
    </location>
    <ligand>
        <name>NAD(+)</name>
        <dbReference type="ChEBI" id="CHEBI:57540"/>
    </ligand>
</feature>
<feature type="binding site" evidence="1">
    <location>
        <position position="343"/>
    </location>
    <ligand>
        <name>NAD(+)</name>
        <dbReference type="ChEBI" id="CHEBI:57540"/>
    </ligand>
</feature>
<feature type="binding site" evidence="1">
    <location>
        <begin position="400"/>
        <end position="402"/>
    </location>
    <ligand>
        <name>NAD(+)</name>
        <dbReference type="ChEBI" id="CHEBI:57540"/>
    </ligand>
</feature>
<feature type="binding site" evidence="1">
    <location>
        <position position="407"/>
    </location>
    <ligand>
        <name>NAD(+)</name>
        <dbReference type="ChEBI" id="CHEBI:57540"/>
    </ligand>
</feature>
<feature type="binding site" evidence="1">
    <location>
        <position position="429"/>
    </location>
    <ligand>
        <name>NAD(+)</name>
        <dbReference type="ChEBI" id="CHEBI:57540"/>
    </ligand>
</feature>
<feature type="binding site" evidence="1">
    <location>
        <position position="453"/>
    </location>
    <ligand>
        <name>NAD(+)</name>
        <dbReference type="ChEBI" id="CHEBI:57540"/>
    </ligand>
</feature>
<feature type="binding site" evidence="1">
    <location>
        <position position="500"/>
    </location>
    <ligand>
        <name>substrate</name>
    </ligand>
</feature>
<feature type="binding site" evidence="1">
    <location>
        <position position="660"/>
    </location>
    <ligand>
        <name>substrate</name>
    </ligand>
</feature>
<feature type="site" description="Important for catalytic activity" evidence="1">
    <location>
        <position position="119"/>
    </location>
</feature>
<feature type="site" description="Important for catalytic activity" evidence="1">
    <location>
        <position position="139"/>
    </location>
</feature>
<accession>B1XAK8</accession>
<comment type="function">
    <text evidence="1">Involved in the aerobic and anaerobic degradation of long-chain fatty acids via beta-oxidation cycle. Catalyzes the formation of 3-oxoacyl-CoA from enoyl-CoA via L-3-hydroxyacyl-CoA. It can also use D-3-hydroxyacyl-CoA and cis-3-enoyl-CoA as substrate.</text>
</comment>
<comment type="catalytic activity">
    <reaction evidence="1">
        <text>a (3S)-3-hydroxyacyl-CoA + NAD(+) = a 3-oxoacyl-CoA + NADH + H(+)</text>
        <dbReference type="Rhea" id="RHEA:22432"/>
        <dbReference type="ChEBI" id="CHEBI:15378"/>
        <dbReference type="ChEBI" id="CHEBI:57318"/>
        <dbReference type="ChEBI" id="CHEBI:57540"/>
        <dbReference type="ChEBI" id="CHEBI:57945"/>
        <dbReference type="ChEBI" id="CHEBI:90726"/>
        <dbReference type="EC" id="1.1.1.35"/>
    </reaction>
</comment>
<comment type="catalytic activity">
    <reaction evidence="1">
        <text>a (3S)-3-hydroxyacyl-CoA = a (2E)-enoyl-CoA + H2O</text>
        <dbReference type="Rhea" id="RHEA:16105"/>
        <dbReference type="ChEBI" id="CHEBI:15377"/>
        <dbReference type="ChEBI" id="CHEBI:57318"/>
        <dbReference type="ChEBI" id="CHEBI:58856"/>
        <dbReference type="EC" id="4.2.1.17"/>
    </reaction>
</comment>
<comment type="catalytic activity">
    <reaction evidence="1">
        <text>a 4-saturated-(3S)-3-hydroxyacyl-CoA = a (3E)-enoyl-CoA + H2O</text>
        <dbReference type="Rhea" id="RHEA:20724"/>
        <dbReference type="ChEBI" id="CHEBI:15377"/>
        <dbReference type="ChEBI" id="CHEBI:58521"/>
        <dbReference type="ChEBI" id="CHEBI:137480"/>
        <dbReference type="EC" id="4.2.1.17"/>
    </reaction>
</comment>
<comment type="catalytic activity">
    <reaction evidence="1">
        <text>(3S)-3-hydroxybutanoyl-CoA = (3R)-3-hydroxybutanoyl-CoA</text>
        <dbReference type="Rhea" id="RHEA:21760"/>
        <dbReference type="ChEBI" id="CHEBI:57315"/>
        <dbReference type="ChEBI" id="CHEBI:57316"/>
        <dbReference type="EC" id="5.1.2.3"/>
    </reaction>
</comment>
<comment type="catalytic activity">
    <reaction evidence="1">
        <text>a (3Z)-enoyl-CoA = a 4-saturated (2E)-enoyl-CoA</text>
        <dbReference type="Rhea" id="RHEA:45900"/>
        <dbReference type="ChEBI" id="CHEBI:85097"/>
        <dbReference type="ChEBI" id="CHEBI:85489"/>
        <dbReference type="EC" id="5.3.3.8"/>
    </reaction>
</comment>
<comment type="catalytic activity">
    <reaction evidence="1">
        <text>a (3E)-enoyl-CoA = a 4-saturated (2E)-enoyl-CoA</text>
        <dbReference type="Rhea" id="RHEA:45228"/>
        <dbReference type="ChEBI" id="CHEBI:58521"/>
        <dbReference type="ChEBI" id="CHEBI:85097"/>
        <dbReference type="EC" id="5.3.3.8"/>
    </reaction>
</comment>
<comment type="pathway">
    <text evidence="1">Lipid metabolism; fatty acid beta-oxidation.</text>
</comment>
<comment type="subunit">
    <text evidence="1">Heterotetramer of two alpha chains (FadB) and two beta chains (FadA).</text>
</comment>
<comment type="similarity">
    <text evidence="1">In the N-terminal section; belongs to the enoyl-CoA hydratase/isomerase family.</text>
</comment>
<comment type="similarity">
    <text evidence="1">In the C-terminal section; belongs to the 3-hydroxyacyl-CoA dehydrogenase family.</text>
</comment>
<name>FADB_ECODH</name>